<reference key="1">
    <citation type="journal article" date="1992" name="EMBO J.">
        <title>Isolation of a hagfish gene that encodes a complement component.</title>
        <authorList>
            <person name="Ishiguro H."/>
            <person name="Kobayashi K."/>
            <person name="Suzuki M."/>
            <person name="Titani K."/>
            <person name="Tomonaga S."/>
            <person name="Kurosawa Y."/>
        </authorList>
    </citation>
    <scope>NUCLEOTIDE SEQUENCE [GENOMIC DNA / MRNA]</scope>
    <scope>PARTIAL PROTEIN SEQUENCE</scope>
</reference>
<keyword id="KW-0180">Complement pathway</keyword>
<keyword id="KW-0903">Direct protein sequencing</keyword>
<keyword id="KW-1015">Disulfide bond</keyword>
<keyword id="KW-0325">Glycoprotein</keyword>
<keyword id="KW-0391">Immunity</keyword>
<keyword id="KW-0395">Inflammatory response</keyword>
<keyword id="KW-0399">Innate immunity</keyword>
<keyword id="KW-1185">Reference proteome</keyword>
<keyword id="KW-0964">Secreted</keyword>
<keyword id="KW-0882">Thioester bond</keyword>
<protein>
    <recommendedName>
        <fullName>Complement C3</fullName>
    </recommendedName>
    <component>
        <recommendedName>
            <fullName>Complement C3 beta chain</fullName>
        </recommendedName>
    </component>
    <component>
        <recommendedName>
            <fullName>Complement C3 alpha chain</fullName>
        </recommendedName>
    </component>
    <component>
        <recommendedName>
            <fullName>C3a anaphylatoxin</fullName>
        </recommendedName>
    </component>
    <component>
        <recommendedName>
            <fullName>Complement C3b</fullName>
        </recommendedName>
        <alternativeName>
            <fullName>Complement C3b-alpha' chain</fullName>
        </alternativeName>
    </component>
</protein>
<organism>
    <name type="scientific">Eptatretus burgeri</name>
    <name type="common">Inshore hagfish</name>
    <dbReference type="NCBI Taxonomy" id="7764"/>
    <lineage>
        <taxon>Eukaryota</taxon>
        <taxon>Metazoa</taxon>
        <taxon>Chordata</taxon>
        <taxon>Craniata</taxon>
        <taxon>Vertebrata</taxon>
        <taxon>Cyclostomata</taxon>
        <taxon>Myxini</taxon>
        <taxon>Myxiniformes</taxon>
        <taxon>Myxinidae</taxon>
        <taxon>Eptatretinae</taxon>
        <taxon>Eptatretus</taxon>
    </lineage>
</organism>
<feature type="chain" id="PRO_0000005942" description="Complement C3">
    <location>
        <begin position="1" status="less than"/>
        <end position="1620"/>
    </location>
</feature>
<feature type="chain" id="PRO_0000005943" description="Complement C3 beta chain" evidence="1">
    <location>
        <begin position="1" status="less than"/>
        <end position="633"/>
    </location>
</feature>
<feature type="chain" id="PRO_0000005944" description="Complement C3 alpha chain" evidence="1">
    <location>
        <begin position="634"/>
        <end position="1336"/>
    </location>
</feature>
<feature type="chain" id="PRO_0000005945" description="C3a anaphylatoxin" evidence="1">
    <location>
        <begin position="634"/>
        <end position="714"/>
    </location>
</feature>
<feature type="chain" id="PRO_0000005946" description="Complement C3b" evidence="1">
    <location>
        <begin position="715"/>
        <end position="1620"/>
    </location>
</feature>
<feature type="domain" description="Anaphylatoxin-like" evidence="3">
    <location>
        <begin position="658"/>
        <end position="694"/>
    </location>
</feature>
<feature type="domain" description="NTR" evidence="4">
    <location>
        <begin position="1479"/>
        <end position="1616"/>
    </location>
</feature>
<feature type="region of interest" description="Properdin-binding">
    <location>
        <begin position="1406"/>
        <end position="1416"/>
    </location>
</feature>
<feature type="glycosylation site" description="N-linked (GlcNAc...) asparagine" evidence="2">
    <location>
        <position position="190"/>
    </location>
</feature>
<feature type="glycosylation site" description="N-linked (GlcNAc...) asparagine" evidence="2">
    <location>
        <position position="989"/>
    </location>
</feature>
<feature type="disulfide bond" description="Interchain (between beta and alpha chains)" evidence="3 4">
    <location>
        <begin position="526"/>
        <end position="780"/>
    </location>
</feature>
<feature type="disulfide bond" evidence="1">
    <location>
        <begin position="593"/>
        <end position="628"/>
    </location>
</feature>
<feature type="disulfide bond" evidence="1">
    <location>
        <begin position="658"/>
        <end position="686"/>
    </location>
</feature>
<feature type="disulfide bond" evidence="1">
    <location>
        <begin position="659"/>
        <end position="693"/>
    </location>
</feature>
<feature type="disulfide bond" evidence="1">
    <location>
        <begin position="672"/>
        <end position="694"/>
    </location>
</feature>
<feature type="disulfide bond" evidence="1">
    <location>
        <begin position="836"/>
        <end position="1474"/>
    </location>
</feature>
<feature type="disulfide bond" evidence="1">
    <location>
        <begin position="1062"/>
        <end position="1114"/>
    </location>
</feature>
<feature type="disulfide bond" evidence="1">
    <location>
        <begin position="1321"/>
        <end position="1451"/>
    </location>
</feature>
<feature type="disulfide bond" evidence="1">
    <location>
        <begin position="1356"/>
        <end position="1420"/>
    </location>
</feature>
<feature type="disulfide bond" evidence="1">
    <location>
        <begin position="1467"/>
        <end position="1472"/>
    </location>
</feature>
<feature type="disulfide bond" evidence="1">
    <location>
        <begin position="1479"/>
        <end position="1551"/>
    </location>
</feature>
<feature type="disulfide bond" evidence="1">
    <location>
        <begin position="1499"/>
        <end position="1616"/>
    </location>
</feature>
<feature type="disulfide bond" evidence="1">
    <location>
        <begin position="1598"/>
        <end position="1607"/>
    </location>
</feature>
<feature type="cross-link" description="Isoglutamyl cysteine thioester (Cys-Gln)" evidence="1">
    <location>
        <begin position="970"/>
        <end position="973"/>
    </location>
</feature>
<feature type="non-terminal residue">
    <location>
        <position position="1"/>
    </location>
</feature>
<dbReference type="EMBL" id="Z11595">
    <property type="protein sequence ID" value="CAA77677.1"/>
    <property type="molecule type" value="mRNA"/>
</dbReference>
<dbReference type="EMBL" id="Z11596">
    <property type="protein sequence ID" value="CAB63257.1"/>
    <property type="status" value="ALT_SEQ"/>
    <property type="molecule type" value="Genomic_DNA"/>
</dbReference>
<dbReference type="PIR" id="S21045">
    <property type="entry name" value="S21045"/>
</dbReference>
<dbReference type="SMR" id="P98094"/>
<dbReference type="GlyCosmos" id="P98094">
    <property type="glycosylation" value="2 sites, No reported glycans"/>
</dbReference>
<dbReference type="Proteomes" id="UP000694388">
    <property type="component" value="Unplaced"/>
</dbReference>
<dbReference type="GO" id="GO:0005615">
    <property type="term" value="C:extracellular space"/>
    <property type="evidence" value="ECO:0007669"/>
    <property type="project" value="InterPro"/>
</dbReference>
<dbReference type="GO" id="GO:0004866">
    <property type="term" value="F:endopeptidase inhibitor activity"/>
    <property type="evidence" value="ECO:0007669"/>
    <property type="project" value="InterPro"/>
</dbReference>
<dbReference type="GO" id="GO:0006958">
    <property type="term" value="P:complement activation, classical pathway"/>
    <property type="evidence" value="ECO:0007669"/>
    <property type="project" value="UniProtKB-KW"/>
</dbReference>
<dbReference type="GO" id="GO:0006954">
    <property type="term" value="P:inflammatory response"/>
    <property type="evidence" value="ECO:0007669"/>
    <property type="project" value="UniProtKB-KW"/>
</dbReference>
<dbReference type="GO" id="GO:0045087">
    <property type="term" value="P:innate immune response"/>
    <property type="evidence" value="ECO:0007669"/>
    <property type="project" value="UniProtKB-KW"/>
</dbReference>
<dbReference type="CDD" id="cd00017">
    <property type="entry name" value="ANATO"/>
    <property type="match status" value="1"/>
</dbReference>
<dbReference type="CDD" id="cd02896">
    <property type="entry name" value="complement_C3_C4_C5"/>
    <property type="match status" value="1"/>
</dbReference>
<dbReference type="CDD" id="cd03574">
    <property type="entry name" value="NTR_complement_C345C"/>
    <property type="match status" value="1"/>
</dbReference>
<dbReference type="Gene3D" id="1.50.10.20">
    <property type="match status" value="1"/>
</dbReference>
<dbReference type="Gene3D" id="2.20.130.20">
    <property type="match status" value="1"/>
</dbReference>
<dbReference type="Gene3D" id="2.40.50.120">
    <property type="match status" value="1"/>
</dbReference>
<dbReference type="Gene3D" id="2.60.120.1540">
    <property type="match status" value="1"/>
</dbReference>
<dbReference type="Gene3D" id="2.60.40.1930">
    <property type="match status" value="3"/>
</dbReference>
<dbReference type="Gene3D" id="2.60.40.1940">
    <property type="match status" value="1"/>
</dbReference>
<dbReference type="Gene3D" id="6.20.50.160">
    <property type="match status" value="1"/>
</dbReference>
<dbReference type="Gene3D" id="2.60.40.690">
    <property type="entry name" value="Alpha-macroglobulin, receptor-binding domain"/>
    <property type="match status" value="1"/>
</dbReference>
<dbReference type="Gene3D" id="1.20.91.20">
    <property type="entry name" value="Anaphylotoxins (complement system)"/>
    <property type="match status" value="1"/>
</dbReference>
<dbReference type="Gene3D" id="2.60.40.10">
    <property type="entry name" value="Immunoglobulins"/>
    <property type="match status" value="2"/>
</dbReference>
<dbReference type="InterPro" id="IPR009048">
    <property type="entry name" value="A-macroglobulin_rcpt-bd"/>
</dbReference>
<dbReference type="InterPro" id="IPR036595">
    <property type="entry name" value="A-macroglobulin_rcpt-bd_sf"/>
</dbReference>
<dbReference type="InterPro" id="IPR050473">
    <property type="entry name" value="A2M/Complement_sys"/>
</dbReference>
<dbReference type="InterPro" id="IPR011625">
    <property type="entry name" value="A2M_N_BRD"/>
</dbReference>
<dbReference type="InterPro" id="IPR047565">
    <property type="entry name" value="Alpha-macroglob_thiol-ester_cl"/>
</dbReference>
<dbReference type="InterPro" id="IPR011626">
    <property type="entry name" value="Alpha-macroglobulin_TED"/>
</dbReference>
<dbReference type="InterPro" id="IPR000020">
    <property type="entry name" value="Anaphylatoxin/fibulin"/>
</dbReference>
<dbReference type="InterPro" id="IPR018081">
    <property type="entry name" value="Anaphylatoxin_comp_syst"/>
</dbReference>
<dbReference type="InterPro" id="IPR013783">
    <property type="entry name" value="Ig-like_fold"/>
</dbReference>
<dbReference type="InterPro" id="IPR001599">
    <property type="entry name" value="Macroglobln_a2"/>
</dbReference>
<dbReference type="InterPro" id="IPR019742">
    <property type="entry name" value="MacrogloblnA2_CS"/>
</dbReference>
<dbReference type="InterPro" id="IPR002890">
    <property type="entry name" value="MG2"/>
</dbReference>
<dbReference type="InterPro" id="IPR041555">
    <property type="entry name" value="MG3"/>
</dbReference>
<dbReference type="InterPro" id="IPR040839">
    <property type="entry name" value="MG4"/>
</dbReference>
<dbReference type="InterPro" id="IPR001134">
    <property type="entry name" value="Netrin_domain"/>
</dbReference>
<dbReference type="InterPro" id="IPR018933">
    <property type="entry name" value="Netrin_module_non-TIMP"/>
</dbReference>
<dbReference type="InterPro" id="IPR008930">
    <property type="entry name" value="Terpenoid_cyclase/PrenylTrfase"/>
</dbReference>
<dbReference type="InterPro" id="IPR008993">
    <property type="entry name" value="TIMP-like_OB-fold"/>
</dbReference>
<dbReference type="PANTHER" id="PTHR11412">
    <property type="entry name" value="MACROGLOBULIN / COMPLEMENT"/>
    <property type="match status" value="1"/>
</dbReference>
<dbReference type="PANTHER" id="PTHR11412:SF166">
    <property type="entry name" value="NTR DOMAIN-CONTAINING PROTEIN"/>
    <property type="match status" value="1"/>
</dbReference>
<dbReference type="Pfam" id="PF00207">
    <property type="entry name" value="A2M"/>
    <property type="match status" value="1"/>
</dbReference>
<dbReference type="Pfam" id="PF07703">
    <property type="entry name" value="A2M_BRD"/>
    <property type="match status" value="1"/>
</dbReference>
<dbReference type="Pfam" id="PF07677">
    <property type="entry name" value="A2M_recep"/>
    <property type="match status" value="1"/>
</dbReference>
<dbReference type="Pfam" id="PF01821">
    <property type="entry name" value="ANATO"/>
    <property type="match status" value="1"/>
</dbReference>
<dbReference type="Pfam" id="PF01835">
    <property type="entry name" value="MG2"/>
    <property type="match status" value="1"/>
</dbReference>
<dbReference type="Pfam" id="PF17791">
    <property type="entry name" value="MG3"/>
    <property type="match status" value="1"/>
</dbReference>
<dbReference type="Pfam" id="PF17789">
    <property type="entry name" value="MG4"/>
    <property type="match status" value="1"/>
</dbReference>
<dbReference type="Pfam" id="PF01759">
    <property type="entry name" value="NTR"/>
    <property type="match status" value="1"/>
</dbReference>
<dbReference type="Pfam" id="PF07678">
    <property type="entry name" value="TED_complement"/>
    <property type="match status" value="1"/>
</dbReference>
<dbReference type="SMART" id="SM01360">
    <property type="entry name" value="A2M"/>
    <property type="match status" value="1"/>
</dbReference>
<dbReference type="SMART" id="SM01359">
    <property type="entry name" value="A2M_N_2"/>
    <property type="match status" value="1"/>
</dbReference>
<dbReference type="SMART" id="SM01361">
    <property type="entry name" value="A2M_recep"/>
    <property type="match status" value="1"/>
</dbReference>
<dbReference type="SMART" id="SM00104">
    <property type="entry name" value="ANATO"/>
    <property type="match status" value="1"/>
</dbReference>
<dbReference type="SMART" id="SM00643">
    <property type="entry name" value="C345C"/>
    <property type="match status" value="1"/>
</dbReference>
<dbReference type="SMART" id="SM01419">
    <property type="entry name" value="Thiol-ester_cl"/>
    <property type="match status" value="1"/>
</dbReference>
<dbReference type="SUPFAM" id="SSF49410">
    <property type="entry name" value="Alpha-macroglobulin receptor domain"/>
    <property type="match status" value="1"/>
</dbReference>
<dbReference type="SUPFAM" id="SSF47686">
    <property type="entry name" value="Anaphylotoxins (complement system)"/>
    <property type="match status" value="1"/>
</dbReference>
<dbReference type="SUPFAM" id="SSF48239">
    <property type="entry name" value="Terpenoid cyclases/Protein prenyltransferases"/>
    <property type="match status" value="1"/>
</dbReference>
<dbReference type="SUPFAM" id="SSF50242">
    <property type="entry name" value="TIMP-like"/>
    <property type="match status" value="1"/>
</dbReference>
<dbReference type="PROSITE" id="PS00477">
    <property type="entry name" value="ALPHA_2_MACROGLOBULIN"/>
    <property type="match status" value="1"/>
</dbReference>
<dbReference type="PROSITE" id="PS01177">
    <property type="entry name" value="ANAPHYLATOXIN_1"/>
    <property type="match status" value="1"/>
</dbReference>
<dbReference type="PROSITE" id="PS01178">
    <property type="entry name" value="ANAPHYLATOXIN_2"/>
    <property type="match status" value="1"/>
</dbReference>
<dbReference type="PROSITE" id="PS50189">
    <property type="entry name" value="NTR"/>
    <property type="match status" value="1"/>
</dbReference>
<evidence type="ECO:0000250" key="1">
    <source>
        <dbReference type="UniProtKB" id="P01024"/>
    </source>
</evidence>
<evidence type="ECO:0000255" key="2"/>
<evidence type="ECO:0000255" key="3">
    <source>
        <dbReference type="PROSITE-ProRule" id="PRU00022"/>
    </source>
</evidence>
<evidence type="ECO:0000255" key="4">
    <source>
        <dbReference type="PROSITE-ProRule" id="PRU00295"/>
    </source>
</evidence>
<accession>P98094</accession>
<proteinExistence type="evidence at protein level"/>
<gene>
    <name type="primary">C3</name>
</gene>
<name>CO3_EPTBU</name>
<comment type="function">
    <text evidence="1">Precursor of non-enzymatic components of the classical, alternative, lectin and GZMK complement pathways, which consist in a cascade of proteins that leads to phagocytosis and breakdown of pathogens and signaling that strengthens the adaptive immune system.</text>
</comment>
<comment type="function">
    <molecule>Complement C3b</molecule>
    <text evidence="1">Non-enzymatic component of C5 convertase. Generated following cleavage by C3 convertase, it covalently attaches to the surface of pathogens, where it acts as an opsonin that marks the surface of antigens for removal. Complement C3b binds covalently via its reactive thioester, to cell surface carbohydrates or immune aggregates. Together with complement C4b, it then recruits the serine protease complement C2b to form the C5 convertase, which cleaves and activate C5, the next component of the complement pathways. In the alternative complement pathway, recruits the serine protease CFB to form the C5 convertase that cleaves and activates C5.</text>
</comment>
<comment type="function">
    <molecule>C3a anaphylatoxin</molecule>
    <text evidence="1">Mediator of local inflammatory process released following cleavage by C3 convertase. Acts by binding to its receptor, C3AR1, activating G protein-coupled receptor signaling, promoting the phosphorylation, ARRB2-mediated internalization and endocytosis of C3AR1. C3a anaphylatoxin stimulates the activation of immune cells such as mast cells and basophilic leukocytes to release inflammation agents, such as cytokines, chemokines and histamine, which promote inflammation development. Also acts as potent chemoattractant for the migration of macrophages and neutrophils to the inflamed tissues, resulting in neutralization of the inflammatory triggers by multiple ways, such as phagocytosis and generation of reactive oxidants.</text>
</comment>
<comment type="subunit">
    <text evidence="1">In absence of complement activation, the C3 precursor is first processed by the removal of 4 Arg residues, forming two chains, beta and alpha, linked by a disulfide bond.</text>
</comment>
<comment type="subunit">
    <molecule>Complement C3b</molecule>
    <text evidence="1">Complement C3b is composed of complement C3b and complement C3 beta chains that are associated via disulfide bonds. Non-enzymatic component of the C5 convertase, also named C4bC2bC3b, composed of the serine protease complement C2b (C2), complement C3b, as well as complement C4b (C4). Non-enzymatic component of the C5 convertase of the alternative complement pathways composed of the serine protease complement CFB and complement C3b. Interacts with CFP; interaction takes place together with CFB in the alternative complement system and allows the complex to become active. Interacts with CR1 (via Sushi 8 and Sushi 9 domains). Interacts with CFH.</text>
</comment>
<comment type="subcellular location">
    <subcellularLocation>
        <location evidence="1">Secreted</location>
    </subcellularLocation>
</comment>
<comment type="subcellular location">
    <molecule>Complement C3b</molecule>
    <subcellularLocation>
        <location evidence="1">Secreted</location>
    </subcellularLocation>
    <subcellularLocation>
        <location evidence="1">Cell surface</location>
    </subcellularLocation>
    <text evidence="1">Covalently associated with the surface of pathogens: the internal thioester bond reacts with carbohydrate antigens on the target surface to form amide or ester bonds.</text>
</comment>
<comment type="subcellular location">
    <molecule>C3a anaphylatoxin</molecule>
    <subcellularLocation>
        <location evidence="1">Secreted</location>
    </subcellularLocation>
</comment>
<comment type="PTM">
    <text evidence="1">C3 precursor is first processed by the removal of 4 Arg residues, forming two chains, beta and alpha, linked by a disulfide bond. During activation of the complement systems, the alpha chain is cleaved into C3a and C3b by the C3 convertase: C3b stays linked to the beta chain, while C3a is released in the plasma. The alpha chain is cleaved by the serine protease complement C2b component of the C3 convertase to generate C3a and C3b following activation by the classical, lectin and GZMK complement systems. The alpha chain is cleaved by CFB component of the C3 convertase to generate C3a and C3b following activation by the alternative complement system.</text>
</comment>
<comment type="PTM">
    <molecule>C3a anaphylatoxin</molecule>
    <text evidence="1">C3a is further processed by carboxypeptidases to release the C-terminal arginine residue generating the acylation stimulating protein (ASP). Levels of ASP are increased in adipocytes in the postprandial period and by insulin and dietary chylomicrons.</text>
</comment>
<comment type="PTM">
    <molecule>Complement C3b</molecule>
    <text evidence="1">Complement C3b is rapidly split in two positions by factor I (CFI) and a cofactor (CFH) to form iC3b (inactivated C3b) and C3f which is released. CFI and CFH catalyze proteolytic degradation of already-deposited complement C3b. Then iC3b is slowly cleaved (possibly by CFI) to form C3c (beta chain + alpha' chain fragment 1 + alpha' chain fragment 2), C3dg and C3f. Other proteases produce other fragments such as C3d or C3g.</text>
</comment>
<comment type="PTM">
    <molecule>Complement C3b</molecule>
    <text evidence="1">Upon activation, the internal thioester bond reacts with carbohydrate antigens on the target surface to form amide or ester bonds, leading to covalent association with the surface of pathogens.</text>
</comment>
<comment type="PTM">
    <molecule>Complement C3b</molecule>
    <text evidence="1">Complement C3b interacts with complement C4b via a thioester linkage.</text>
</comment>
<comment type="PTM">
    <text evidence="1">Phosphorylated by FAM20C in the extracellular medium.</text>
</comment>
<sequence length="1620" mass="181747">VLVIAPAATSSYDDLAVAILMVDQKKITEVHVLLVNPHTGATLDEKKVKLQWDNKFIAFTKLQVTPKEVEKWKEDFVRLMVKWDGGQHMEIDIPLTSRRGLVFAQTDQPIYTPNNDVNIRLFPVTRQLNPILSSLVVDIMNPDGVVVDRIEKNAFEVEKVMELRPFHVPAITSLGDWKIVSWMKDKPQFNYTSGFKVEEYVLPTFDVSITSEQPYLHVYDKAFTIHIKAMHIYGKPVMGRAYVRYGVKHQSKRTLLSTSSALARFEQGEAMHTLRQKHILEQYPDPKLLLGQSLYVEASVISSDAGEIENSILDDIPIVASPYSIKSKWTVPFFKPGVPYIYKVLVLNPDGSPASGVPIKVSFSFDSSGNWITQKRKTMDNGIAMQTINTARNSKKLNIKVQTEDERLEQSQQAEASFTIASYSSPSGSFIHLNAHREVKSPGEHIVFDVFIKSAAKDHVLHFNYLMISNGKIHNFLQEGRKGDTTSVSLLLTPELVPQFRLVAFFILPSGELVADSIIIDVKDSCHAKLSLDVAGGKRLFSPRDNVNFDLSGESDSWVAVGVVDKAAYVLDKKNKLTANKVYKAMEASDLGCSVGSGKTGPLVFRDAGLAIMAKEISGMDDVKDPGCPNGHTRRKRELVLEIAIEKASTYPAELRKCCRDAAIESPLRLSCEERTKHIHDEGEGCQETFLECCKHVEEELLIAMEEEDEDLGRSQGEDFMIQESQVVIRSHFPESFMWEIIKLSRSAENGKSRITKKMPDSITTWDIQAVEVSQSKGLCVGPSLELTVFKQFFLKVHTPYALKQYEQVELRVVIYNYMNQDVKGEIQVKCGDGICTDAEQNEPLKSRFAVEKNSATSFSFMVVPLSSSDSSVSVLARVFGSDVHDAVEKDLRVMPEGNYEEMSRSWSVQPRRHGGQQVIVVDNETPQNVVPGTEMSAFLSAQGNLVAETIQNTLKGSKISNLLRLPRGCGEQNMMYTSITVMVARYLNRSDQWNKMGDPQLKKRSFDFITSGFASQLTYRKPDYSYAAWLHRASSTWLTAFVAKVFSQARQLVFIPVSEICGSVRWLMRKQDKDGSFLESKPVVHLNMMGQVTGKVVLTSFVFIALLEARESCINEVEGFTVVVEKAHGYLTSQAMNGLEDFPLAITAYALSLWKVSDGAAKVTMHTLKTSGLQTEELIHWGSNKGKAAAVESTAYGLLAAIQHEEGEIAEKATNWLSQSATFGGYFQSTQDTVMALQALTGFESCQSRMKKMDLSFKIRAEENGVFDKEFQITNDNAFVQKPFKVPVHGQLTVTASGTGQGILTFVKKYREKVVIKKDCKGFSLEITTNLDNQVKQRRRQSINPEFNVYRFIGCFRYLRNQEPGMVVMDISLPTGFEAKKKDLDDMKNLVDNYIVQYEIRPGRVFLYLDKVNKDEKNCVGFRLNQVFESNLVLPVTATVFEYYEPDFRCSKSYHPKMEVNPDASCHGNICNCLQRHCVELKGMADEDRNADRNGNACRAEYVFIIGVTKVTKTASYININAALKTVLKKGMDQAINVGARRSFVIPMHCGKNLNVSPGDIYLVMGMHNAHWRNSDRTQYVLTSDTWFEKFPLESVCRLPSPPASCQVSENFKGCSLKG</sequence>